<protein>
    <recommendedName>
        <fullName>Dynein, 78 kDa intermediate chain, flagellar outer arm</fullName>
    </recommendedName>
    <alternativeName>
        <fullName>IC78</fullName>
    </alternativeName>
</protein>
<organism>
    <name type="scientific">Chlamydomonas reinhardtii</name>
    <name type="common">Chlamydomonas smithii</name>
    <dbReference type="NCBI Taxonomy" id="3055"/>
    <lineage>
        <taxon>Eukaryota</taxon>
        <taxon>Viridiplantae</taxon>
        <taxon>Chlorophyta</taxon>
        <taxon>core chlorophytes</taxon>
        <taxon>Chlorophyceae</taxon>
        <taxon>CS clade</taxon>
        <taxon>Chlamydomonadales</taxon>
        <taxon>Chlamydomonadaceae</taxon>
        <taxon>Chlamydomonas</taxon>
    </lineage>
</organism>
<keyword id="KW-0002">3D-structure</keyword>
<keyword id="KW-0966">Cell projection</keyword>
<keyword id="KW-0969">Cilium</keyword>
<keyword id="KW-0963">Cytoplasm</keyword>
<keyword id="KW-0206">Cytoskeleton</keyword>
<keyword id="KW-0903">Direct protein sequencing</keyword>
<keyword id="KW-0243">Dynein</keyword>
<keyword id="KW-0282">Flagellum</keyword>
<keyword id="KW-0493">Microtubule</keyword>
<keyword id="KW-0505">Motor protein</keyword>
<keyword id="KW-0677">Repeat</keyword>
<keyword id="KW-0853">WD repeat</keyword>
<sequence length="683" mass="76525">MPALSPAKKGTDKGKTGKKTGKQEQNAQDYIPPPPPMPGDEAFAMPIREIVKPDNQLWLSEADLNEEVAKMLTANNPAAPKNIVRFNMKDKVFKLEPMVEQTVVHYATDGWLLHKSSDEAKRQMDMEKMEQEASARFQADIDRASHEHKDHGDVEPPDDSRQLRNQFNFSERAAQTLNYPLRDRETFTEPPPTATVSGACTQWEIYDEYIKDLERQRIDEAMKSKGGKKAAAAARAAGAAHRQRNEHVPTLQSPTLMHSLGTLDRMVNQNMYEEVAMDFKYWDDASDAFRPGEGSLLPLWRFVSDKSKRRQVTSVCWNPLYDDMFAVGYGSYEFLKQASGLINIYSLKNPSHPEYTFHTESGVMCVHFHPEFANLLAVGCYDGSVLVYDVRLKKDEPIYQASVRTGKLNDPVWQIYWQPDDAQKSLQFVSISSDGAVNLWTLTKSELIPECLMKLRVVRAGETREEEDPNASGAAGGCCMDFCKMPGQESIYLVGTEEGAIHRCSKAYSSQYLSTYVSHHLAVYAVHWNNIHPSMFLSASCRLDHQAVGLCHDPKRAVMNFDLNDSIGDVSWAALQPTVFAAVTDDGRVHVFDLAQNKLLPLCSQKVVKKAKLTKLVFNPKHPIVLVGDDKGCVTSLKLSPNLRITSKPEKGQKFEDLEVAKLDGVVEIARKSDADLAKNAAH</sequence>
<proteinExistence type="evidence at protein level"/>
<gene>
    <name type="primary">ODA9</name>
    <name type="synonym">ODA-9</name>
</gene>
<name>DYI2_CHLRE</name>
<accession>Q39578</accession>
<reference key="1">
    <citation type="journal article" date="1995" name="J. Cell Biol.">
        <title>The 78,000 M(r) intermediate chain of Chlamydomonas outer arm dynein is a WD-repeat protein required for arm assembly.</title>
        <authorList>
            <person name="Wilkerson C.G."/>
            <person name="King S.M."/>
            <person name="Koutoulis A."/>
            <person name="Pazour G.J."/>
            <person name="Witman G.B."/>
        </authorList>
    </citation>
    <scope>NUCLEOTIDE SEQUENCE [MRNA]</scope>
    <scope>PROTEIN SEQUENCE OF 2-18 AND 560-573</scope>
    <source>
        <strain>1132D</strain>
    </source>
</reference>
<evidence type="ECO:0000256" key="1">
    <source>
        <dbReference type="SAM" id="MobiDB-lite"/>
    </source>
</evidence>
<evidence type="ECO:0000269" key="2">
    <source>
    </source>
</evidence>
<evidence type="ECO:0000305" key="3"/>
<comment type="function">
    <text>Is essential for arm assembly or attachment to the outer doublet microtubule.</text>
</comment>
<comment type="subunit">
    <text>Consists of at least 3 heavy chains (alpha, beta and gamma), 2 intermediate chains and 8 light chains.</text>
</comment>
<comment type="interaction">
    <interactant intactId="EBI-8534634">
        <id>Q39578</id>
    </interactant>
    <interactant intactId="EBI-8534794">
        <id>A8IPZ5</id>
        <label>CHLRE_17g703850v5</label>
    </interactant>
    <organismsDiffer>false</organismsDiffer>
    <experiments>2</experiments>
</comment>
<comment type="interaction">
    <interactant intactId="EBI-8534634">
        <id>Q39578</id>
    </interactant>
    <interactant intactId="EBI-6081316">
        <id>P27766</id>
        <label>ODA6</label>
    </interactant>
    <organismsDiffer>false</organismsDiffer>
    <experiments>2</experiments>
</comment>
<comment type="subcellular location">
    <subcellularLocation>
        <location>Cytoplasm</location>
        <location>Cytoskeleton</location>
        <location>Flagellum axoneme</location>
    </subcellularLocation>
</comment>
<comment type="similarity">
    <text evidence="3">Belongs to the dynein intermediate chain family.</text>
</comment>
<feature type="initiator methionine" description="Removed" evidence="2">
    <location>
        <position position="1"/>
    </location>
</feature>
<feature type="chain" id="PRO_0000114663" description="Dynein, 78 kDa intermediate chain, flagellar outer arm">
    <location>
        <begin position="2"/>
        <end position="683"/>
    </location>
</feature>
<feature type="repeat" description="WD 1">
    <location>
        <begin position="358"/>
        <end position="398"/>
    </location>
</feature>
<feature type="repeat" description="WD 2">
    <location>
        <begin position="407"/>
        <end position="450"/>
    </location>
</feature>
<feature type="repeat" description="WD 3">
    <location>
        <begin position="562"/>
        <end position="602"/>
    </location>
</feature>
<feature type="repeat" description="WD 4">
    <location>
        <begin position="608"/>
        <end position="647"/>
    </location>
</feature>
<feature type="region of interest" description="Disordered" evidence="1">
    <location>
        <begin position="1"/>
        <end position="42"/>
    </location>
</feature>
<dbReference type="EMBL" id="U19120">
    <property type="protein sequence ID" value="AAA80213.1"/>
    <property type="molecule type" value="mRNA"/>
</dbReference>
<dbReference type="PIR" id="A57037">
    <property type="entry name" value="A57037"/>
</dbReference>
<dbReference type="PDB" id="7KZM">
    <property type="method" value="EM"/>
    <property type="resolution" value="7.50 A"/>
    <property type="chains" value="D=1-683"/>
</dbReference>
<dbReference type="PDB" id="7KZN">
    <property type="method" value="EM"/>
    <property type="resolution" value="4.00 A"/>
    <property type="chains" value="D=1-683"/>
</dbReference>
<dbReference type="PDB" id="8GLV">
    <property type="method" value="EM"/>
    <property type="resolution" value="3.10 A"/>
    <property type="chains" value="Aa/Ab/Fo/Kt/Lp=1-683"/>
</dbReference>
<dbReference type="PDBsum" id="7KZM"/>
<dbReference type="PDBsum" id="7KZN"/>
<dbReference type="PDBsum" id="8GLV"/>
<dbReference type="EMDB" id="EMD-23082"/>
<dbReference type="EMDB" id="EMD-23083"/>
<dbReference type="EMDB" id="EMD-40220"/>
<dbReference type="SMR" id="Q39578"/>
<dbReference type="IntAct" id="Q39578">
    <property type="interactions" value="3"/>
</dbReference>
<dbReference type="MINT" id="Q39578"/>
<dbReference type="PaxDb" id="3055-EDP03447"/>
<dbReference type="eggNOG" id="KOG1587">
    <property type="taxonomic scope" value="Eukaryota"/>
</dbReference>
<dbReference type="GO" id="GO:0005737">
    <property type="term" value="C:cytoplasm"/>
    <property type="evidence" value="ECO:0007669"/>
    <property type="project" value="UniProtKB-KW"/>
</dbReference>
<dbReference type="GO" id="GO:0030286">
    <property type="term" value="C:dynein complex"/>
    <property type="evidence" value="ECO:0007669"/>
    <property type="project" value="UniProtKB-KW"/>
</dbReference>
<dbReference type="GO" id="GO:0005874">
    <property type="term" value="C:microtubule"/>
    <property type="evidence" value="ECO:0007669"/>
    <property type="project" value="UniProtKB-KW"/>
</dbReference>
<dbReference type="GO" id="GO:0031514">
    <property type="term" value="C:motile cilium"/>
    <property type="evidence" value="ECO:0007669"/>
    <property type="project" value="UniProtKB-KW"/>
</dbReference>
<dbReference type="FunFam" id="2.130.10.10:FF:001006">
    <property type="entry name" value="Dynein intermediate chain 1, axonemal"/>
    <property type="match status" value="1"/>
</dbReference>
<dbReference type="FunFam" id="2.130.10.10:FF:001467">
    <property type="entry name" value="Flagellar outer dynein arm intermediate chain 1"/>
    <property type="match status" value="1"/>
</dbReference>
<dbReference type="Gene3D" id="2.130.10.10">
    <property type="entry name" value="YVTN repeat-like/Quinoprotein amine dehydrogenase"/>
    <property type="match status" value="2"/>
</dbReference>
<dbReference type="InterPro" id="IPR050687">
    <property type="entry name" value="Dynein_IC"/>
</dbReference>
<dbReference type="InterPro" id="IPR015943">
    <property type="entry name" value="WD40/YVTN_repeat-like_dom_sf"/>
</dbReference>
<dbReference type="InterPro" id="IPR036322">
    <property type="entry name" value="WD40_repeat_dom_sf"/>
</dbReference>
<dbReference type="InterPro" id="IPR001680">
    <property type="entry name" value="WD40_rpt"/>
</dbReference>
<dbReference type="PANTHER" id="PTHR12442:SF11">
    <property type="entry name" value="DYNEIN AXONEMAL INTERMEDIATE CHAIN 1"/>
    <property type="match status" value="1"/>
</dbReference>
<dbReference type="PANTHER" id="PTHR12442">
    <property type="entry name" value="DYNEIN INTERMEDIATE CHAIN"/>
    <property type="match status" value="1"/>
</dbReference>
<dbReference type="Pfam" id="PF00400">
    <property type="entry name" value="WD40"/>
    <property type="match status" value="1"/>
</dbReference>
<dbReference type="SMART" id="SM00320">
    <property type="entry name" value="WD40"/>
    <property type="match status" value="4"/>
</dbReference>
<dbReference type="SUPFAM" id="SSF50978">
    <property type="entry name" value="WD40 repeat-like"/>
    <property type="match status" value="1"/>
</dbReference>
<dbReference type="PROSITE" id="PS50294">
    <property type="entry name" value="WD_REPEATS_REGION"/>
    <property type="match status" value="1"/>
</dbReference>